<accession>Q9DCN2</accession>
<sequence>MGAQLSTLSHVVLSPVWFIYSLFMKLFQRSTPAITLENPDIKYPLRLIDKEVISPDTRRFRFALPSPQHILGLPIGQHIYLSTRIDGNLVIRPYTPVSSDDDKGFVDLVVKVYFKDTHPKFPAGGKMSQYLENMKIGDTIEFRGPNGLLVYQGKGKFAIRADKKSNPVVRTVKSVGMIAGGTGITPMLQVIRAVLKDPNDHTVCYLLFANQSEKDILLRPELEELRNEHSARFKLWYTVDKAPDAWDYSQGFVNEEMIRDHLPTPGEEPLILMCGPPPMIQFACLPNLERVGHPKERCFTF</sequence>
<evidence type="ECO:0000250" key="1">
    <source>
        <dbReference type="UniProtKB" id="P00387"/>
    </source>
</evidence>
<evidence type="ECO:0000250" key="2">
    <source>
        <dbReference type="UniProtKB" id="P07514"/>
    </source>
</evidence>
<evidence type="ECO:0000250" key="3">
    <source>
        <dbReference type="UniProtKB" id="P20070"/>
    </source>
</evidence>
<evidence type="ECO:0000250" key="4">
    <source>
        <dbReference type="UniProtKB" id="P83686"/>
    </source>
</evidence>
<evidence type="ECO:0000255" key="5">
    <source>
        <dbReference type="PROSITE-ProRule" id="PRU00716"/>
    </source>
</evidence>
<evidence type="ECO:0000269" key="6">
    <source>
    </source>
</evidence>
<evidence type="ECO:0000305" key="7"/>
<evidence type="ECO:0000312" key="8">
    <source>
        <dbReference type="MGI" id="MGI:94893"/>
    </source>
</evidence>
<evidence type="ECO:0007744" key="9">
    <source>
    </source>
</evidence>
<evidence type="ECO:0007744" key="10">
    <source>
    </source>
</evidence>
<evidence type="ECO:0007744" key="11">
    <source>
    </source>
</evidence>
<protein>
    <recommendedName>
        <fullName evidence="7">NADH-cytochrome b5 reductase 3</fullName>
        <shortName>B5R</shortName>
        <shortName>Cytochrome b5 reductase</shortName>
        <ecNumber evidence="1">1.6.2.2</ecNumber>
    </recommendedName>
    <alternativeName>
        <fullName evidence="1">Diaphorase-1</fullName>
    </alternativeName>
</protein>
<comment type="function">
    <text evidence="1">Catalyzes the reduction of two molecules of cytochrome b5 using NADH as the electron donor.</text>
</comment>
<comment type="catalytic activity">
    <reaction evidence="1">
        <text>2 Fe(III)-[cytochrome b5] + NADH = 2 Fe(II)-[cytochrome b5] + NAD(+) + H(+)</text>
        <dbReference type="Rhea" id="RHEA:46680"/>
        <dbReference type="Rhea" id="RHEA-COMP:10438"/>
        <dbReference type="Rhea" id="RHEA-COMP:10439"/>
        <dbReference type="ChEBI" id="CHEBI:15378"/>
        <dbReference type="ChEBI" id="CHEBI:29033"/>
        <dbReference type="ChEBI" id="CHEBI:29034"/>
        <dbReference type="ChEBI" id="CHEBI:57540"/>
        <dbReference type="ChEBI" id="CHEBI:57945"/>
        <dbReference type="EC" id="1.6.2.2"/>
    </reaction>
    <physiologicalReaction direction="left-to-right" evidence="1">
        <dbReference type="Rhea" id="RHEA:46681"/>
    </physiologicalReaction>
</comment>
<comment type="cofactor">
    <cofactor evidence="1">
        <name>FAD</name>
        <dbReference type="ChEBI" id="CHEBI:57692"/>
    </cofactor>
</comment>
<comment type="subunit">
    <text evidence="4 6">Component of a complex composed of cytochrome b5, NADH-cytochrome b5 reductase (CYB5R3) and MTARC2 (By similarity). Interacts with MTLN; the interaction is required to maintain cellular lipid composition and leads to stimulation of mitochondrial respiratory complex I activity (PubMed:31296841).</text>
</comment>
<comment type="subcellular location">
    <subcellularLocation>
        <location evidence="3">Endoplasmic reticulum membrane</location>
        <topology evidence="3">Lipid-anchor</topology>
        <orientation evidence="3">Cytoplasmic side</orientation>
    </subcellularLocation>
    <subcellularLocation>
        <location evidence="3">Mitochondrion outer membrane</location>
        <topology evidence="3">Lipid-anchor</topology>
        <orientation evidence="3">Cytoplasmic side</orientation>
    </subcellularLocation>
</comment>
<comment type="alternative products">
    <event type="alternative promoter"/>
    <isoform>
        <id>Q9DCN2-1</id>
        <name>1</name>
        <name>M</name>
        <sequence type="displayed"/>
    </isoform>
    <isoform>
        <id>Q9DCN2-2</id>
        <name>2</name>
        <name>S</name>
        <sequence type="described" ref="VSP_012952"/>
    </isoform>
</comment>
<comment type="similarity">
    <text evidence="7">Belongs to the flavoprotein pyridine nucleotide cytochrome reductase family.</text>
</comment>
<keyword id="KW-0007">Acetylation</keyword>
<keyword id="KW-0877">Alternative promoter usage</keyword>
<keyword id="KW-0152">Cholesterol biosynthesis</keyword>
<keyword id="KW-0153">Cholesterol metabolism</keyword>
<keyword id="KW-0903">Direct protein sequencing</keyword>
<keyword id="KW-0256">Endoplasmic reticulum</keyword>
<keyword id="KW-0274">FAD</keyword>
<keyword id="KW-0285">Flavoprotein</keyword>
<keyword id="KW-0444">Lipid biosynthesis</keyword>
<keyword id="KW-0443">Lipid metabolism</keyword>
<keyword id="KW-0449">Lipoprotein</keyword>
<keyword id="KW-0472">Membrane</keyword>
<keyword id="KW-0496">Mitochondrion</keyword>
<keyword id="KW-1000">Mitochondrion outer membrane</keyword>
<keyword id="KW-0519">Myristate</keyword>
<keyword id="KW-0520">NAD</keyword>
<keyword id="KW-0560">Oxidoreductase</keyword>
<keyword id="KW-0597">Phosphoprotein</keyword>
<keyword id="KW-1185">Reference proteome</keyword>
<keyword id="KW-0752">Steroid biosynthesis</keyword>
<keyword id="KW-0753">Steroid metabolism</keyword>
<keyword id="KW-0756">Sterol biosynthesis</keyword>
<keyword id="KW-1207">Sterol metabolism</keyword>
<name>NB5R3_MOUSE</name>
<organism>
    <name type="scientific">Mus musculus</name>
    <name type="common">Mouse</name>
    <dbReference type="NCBI Taxonomy" id="10090"/>
    <lineage>
        <taxon>Eukaryota</taxon>
        <taxon>Metazoa</taxon>
        <taxon>Chordata</taxon>
        <taxon>Craniata</taxon>
        <taxon>Vertebrata</taxon>
        <taxon>Euteleostomi</taxon>
        <taxon>Mammalia</taxon>
        <taxon>Eutheria</taxon>
        <taxon>Euarchontoglires</taxon>
        <taxon>Glires</taxon>
        <taxon>Rodentia</taxon>
        <taxon>Myomorpha</taxon>
        <taxon>Muroidea</taxon>
        <taxon>Muridae</taxon>
        <taxon>Murinae</taxon>
        <taxon>Mus</taxon>
        <taxon>Mus</taxon>
    </lineage>
</organism>
<feature type="initiator methionine" description="Removed" evidence="2">
    <location>
        <position position="1"/>
    </location>
</feature>
<feature type="chain" id="PRO_0000019398" description="NADH-cytochrome b5 reductase 3">
    <location>
        <begin position="2"/>
        <end position="301"/>
    </location>
</feature>
<feature type="domain" description="FAD-binding FR-type" evidence="5">
    <location>
        <begin position="40"/>
        <end position="152"/>
    </location>
</feature>
<feature type="binding site" evidence="1">
    <location>
        <position position="92"/>
    </location>
    <ligand>
        <name>FAD</name>
        <dbReference type="ChEBI" id="CHEBI:57692"/>
    </ligand>
</feature>
<feature type="binding site" evidence="1">
    <location>
        <position position="93"/>
    </location>
    <ligand>
        <name>FAD</name>
        <dbReference type="ChEBI" id="CHEBI:57692"/>
    </ligand>
</feature>
<feature type="binding site" evidence="1">
    <location>
        <position position="94"/>
    </location>
    <ligand>
        <name>FAD</name>
        <dbReference type="ChEBI" id="CHEBI:57692"/>
    </ligand>
</feature>
<feature type="binding site" evidence="1">
    <location>
        <position position="109"/>
    </location>
    <ligand>
        <name>FAD</name>
        <dbReference type="ChEBI" id="CHEBI:57692"/>
    </ligand>
</feature>
<feature type="binding site" evidence="1">
    <location>
        <position position="111"/>
    </location>
    <ligand>
        <name>FAD</name>
        <dbReference type="ChEBI" id="CHEBI:57692"/>
    </ligand>
</feature>
<feature type="binding site" evidence="1">
    <location>
        <position position="114"/>
    </location>
    <ligand>
        <name>FAD</name>
        <dbReference type="ChEBI" id="CHEBI:57692"/>
    </ligand>
</feature>
<feature type="binding site" evidence="1">
    <location>
        <position position="126"/>
    </location>
    <ligand>
        <name>FAD</name>
        <dbReference type="ChEBI" id="CHEBI:57692"/>
    </ligand>
</feature>
<feature type="binding site" evidence="1">
    <location>
        <position position="127"/>
    </location>
    <ligand>
        <name>FAD</name>
        <dbReference type="ChEBI" id="CHEBI:57692"/>
    </ligand>
</feature>
<feature type="binding site" evidence="1">
    <location>
        <position position="128"/>
    </location>
    <ligand>
        <name>FAD</name>
        <dbReference type="ChEBI" id="CHEBI:57692"/>
    </ligand>
</feature>
<feature type="binding site" evidence="1">
    <location>
        <position position="185"/>
    </location>
    <ligand>
        <name>FAD</name>
        <dbReference type="ChEBI" id="CHEBI:57692"/>
    </ligand>
</feature>
<feature type="modified residue" description="N6-acetyllysine" evidence="10 11">
    <location>
        <position position="42"/>
    </location>
</feature>
<feature type="modified residue" description="Phosphotyrosine" evidence="1">
    <location>
        <position position="43"/>
    </location>
</feature>
<feature type="modified residue" description="N6-acetyllysine" evidence="11">
    <location>
        <position position="50"/>
    </location>
</feature>
<feature type="modified residue" description="N6-acetyllysine" evidence="9">
    <location>
        <position position="120"/>
    </location>
</feature>
<feature type="lipid moiety-binding region" description="N-myristoyl glycine" evidence="1">
    <location>
        <position position="2"/>
    </location>
</feature>
<feature type="splice variant" id="VSP_012952" description="In isoform 2." evidence="7">
    <location>
        <begin position="1"/>
        <end position="23"/>
    </location>
</feature>
<feature type="mutagenesis site" description="Decreased levels in mitochondrion and reduced activity of mitochondrial respiratory complex I." evidence="6">
    <original>G</original>
    <variation>A</variation>
    <location>
        <position position="2"/>
    </location>
</feature>
<reference key="1">
    <citation type="journal article" date="2001" name="Mamm. Genome">
        <title>High-throughput sequence identification of gene coding variants within alcohol-related QTLs.</title>
        <authorList>
            <person name="Ehringer M.A."/>
            <person name="Thompson J."/>
            <person name="Conroy O."/>
            <person name="Xu Y."/>
            <person name="Yang F."/>
            <person name="Canniff J."/>
            <person name="Beeson M."/>
            <person name="Gordon L."/>
            <person name="Bennett B."/>
            <person name="Johnson T.E."/>
            <person name="Sikela J.M."/>
        </authorList>
    </citation>
    <scope>NUCLEOTIDE SEQUENCE [MRNA]</scope>
    <source>
        <strain>ILS</strain>
        <strain>ISS</strain>
    </source>
</reference>
<reference key="2">
    <citation type="journal article" date="2005" name="Science">
        <title>The transcriptional landscape of the mammalian genome.</title>
        <authorList>
            <person name="Carninci P."/>
            <person name="Kasukawa T."/>
            <person name="Katayama S."/>
            <person name="Gough J."/>
            <person name="Frith M.C."/>
            <person name="Maeda N."/>
            <person name="Oyama R."/>
            <person name="Ravasi T."/>
            <person name="Lenhard B."/>
            <person name="Wells C."/>
            <person name="Kodzius R."/>
            <person name="Shimokawa K."/>
            <person name="Bajic V.B."/>
            <person name="Brenner S.E."/>
            <person name="Batalov S."/>
            <person name="Forrest A.R."/>
            <person name="Zavolan M."/>
            <person name="Davis M.J."/>
            <person name="Wilming L.G."/>
            <person name="Aidinis V."/>
            <person name="Allen J.E."/>
            <person name="Ambesi-Impiombato A."/>
            <person name="Apweiler R."/>
            <person name="Aturaliya R.N."/>
            <person name="Bailey T.L."/>
            <person name="Bansal M."/>
            <person name="Baxter L."/>
            <person name="Beisel K.W."/>
            <person name="Bersano T."/>
            <person name="Bono H."/>
            <person name="Chalk A.M."/>
            <person name="Chiu K.P."/>
            <person name="Choudhary V."/>
            <person name="Christoffels A."/>
            <person name="Clutterbuck D.R."/>
            <person name="Crowe M.L."/>
            <person name="Dalla E."/>
            <person name="Dalrymple B.P."/>
            <person name="de Bono B."/>
            <person name="Della Gatta G."/>
            <person name="di Bernardo D."/>
            <person name="Down T."/>
            <person name="Engstrom P."/>
            <person name="Fagiolini M."/>
            <person name="Faulkner G."/>
            <person name="Fletcher C.F."/>
            <person name="Fukushima T."/>
            <person name="Furuno M."/>
            <person name="Futaki S."/>
            <person name="Gariboldi M."/>
            <person name="Georgii-Hemming P."/>
            <person name="Gingeras T.R."/>
            <person name="Gojobori T."/>
            <person name="Green R.E."/>
            <person name="Gustincich S."/>
            <person name="Harbers M."/>
            <person name="Hayashi Y."/>
            <person name="Hensch T.K."/>
            <person name="Hirokawa N."/>
            <person name="Hill D."/>
            <person name="Huminiecki L."/>
            <person name="Iacono M."/>
            <person name="Ikeo K."/>
            <person name="Iwama A."/>
            <person name="Ishikawa T."/>
            <person name="Jakt M."/>
            <person name="Kanapin A."/>
            <person name="Katoh M."/>
            <person name="Kawasawa Y."/>
            <person name="Kelso J."/>
            <person name="Kitamura H."/>
            <person name="Kitano H."/>
            <person name="Kollias G."/>
            <person name="Krishnan S.P."/>
            <person name="Kruger A."/>
            <person name="Kummerfeld S.K."/>
            <person name="Kurochkin I.V."/>
            <person name="Lareau L.F."/>
            <person name="Lazarevic D."/>
            <person name="Lipovich L."/>
            <person name="Liu J."/>
            <person name="Liuni S."/>
            <person name="McWilliam S."/>
            <person name="Madan Babu M."/>
            <person name="Madera M."/>
            <person name="Marchionni L."/>
            <person name="Matsuda H."/>
            <person name="Matsuzawa S."/>
            <person name="Miki H."/>
            <person name="Mignone F."/>
            <person name="Miyake S."/>
            <person name="Morris K."/>
            <person name="Mottagui-Tabar S."/>
            <person name="Mulder N."/>
            <person name="Nakano N."/>
            <person name="Nakauchi H."/>
            <person name="Ng P."/>
            <person name="Nilsson R."/>
            <person name="Nishiguchi S."/>
            <person name="Nishikawa S."/>
            <person name="Nori F."/>
            <person name="Ohara O."/>
            <person name="Okazaki Y."/>
            <person name="Orlando V."/>
            <person name="Pang K.C."/>
            <person name="Pavan W.J."/>
            <person name="Pavesi G."/>
            <person name="Pesole G."/>
            <person name="Petrovsky N."/>
            <person name="Piazza S."/>
            <person name="Reed J."/>
            <person name="Reid J.F."/>
            <person name="Ring B.Z."/>
            <person name="Ringwald M."/>
            <person name="Rost B."/>
            <person name="Ruan Y."/>
            <person name="Salzberg S.L."/>
            <person name="Sandelin A."/>
            <person name="Schneider C."/>
            <person name="Schoenbach C."/>
            <person name="Sekiguchi K."/>
            <person name="Semple C.A."/>
            <person name="Seno S."/>
            <person name="Sessa L."/>
            <person name="Sheng Y."/>
            <person name="Shibata Y."/>
            <person name="Shimada H."/>
            <person name="Shimada K."/>
            <person name="Silva D."/>
            <person name="Sinclair B."/>
            <person name="Sperling S."/>
            <person name="Stupka E."/>
            <person name="Sugiura K."/>
            <person name="Sultana R."/>
            <person name="Takenaka Y."/>
            <person name="Taki K."/>
            <person name="Tammoja K."/>
            <person name="Tan S.L."/>
            <person name="Tang S."/>
            <person name="Taylor M.S."/>
            <person name="Tegner J."/>
            <person name="Teichmann S.A."/>
            <person name="Ueda H.R."/>
            <person name="van Nimwegen E."/>
            <person name="Verardo R."/>
            <person name="Wei C.L."/>
            <person name="Yagi K."/>
            <person name="Yamanishi H."/>
            <person name="Zabarovsky E."/>
            <person name="Zhu S."/>
            <person name="Zimmer A."/>
            <person name="Hide W."/>
            <person name="Bult C."/>
            <person name="Grimmond S.M."/>
            <person name="Teasdale R.D."/>
            <person name="Liu E.T."/>
            <person name="Brusic V."/>
            <person name="Quackenbush J."/>
            <person name="Wahlestedt C."/>
            <person name="Mattick J.S."/>
            <person name="Hume D.A."/>
            <person name="Kai C."/>
            <person name="Sasaki D."/>
            <person name="Tomaru Y."/>
            <person name="Fukuda S."/>
            <person name="Kanamori-Katayama M."/>
            <person name="Suzuki M."/>
            <person name="Aoki J."/>
            <person name="Arakawa T."/>
            <person name="Iida J."/>
            <person name="Imamura K."/>
            <person name="Itoh M."/>
            <person name="Kato T."/>
            <person name="Kawaji H."/>
            <person name="Kawagashira N."/>
            <person name="Kawashima T."/>
            <person name="Kojima M."/>
            <person name="Kondo S."/>
            <person name="Konno H."/>
            <person name="Nakano K."/>
            <person name="Ninomiya N."/>
            <person name="Nishio T."/>
            <person name="Okada M."/>
            <person name="Plessy C."/>
            <person name="Shibata K."/>
            <person name="Shiraki T."/>
            <person name="Suzuki S."/>
            <person name="Tagami M."/>
            <person name="Waki K."/>
            <person name="Watahiki A."/>
            <person name="Okamura-Oho Y."/>
            <person name="Suzuki H."/>
            <person name="Kawai J."/>
            <person name="Hayashizaki Y."/>
        </authorList>
    </citation>
    <scope>NUCLEOTIDE SEQUENCE [LARGE SCALE MRNA]</scope>
    <source>
        <strain>C57BL/6J</strain>
        <tissue>Kidney</tissue>
    </source>
</reference>
<reference key="3">
    <citation type="journal article" date="2004" name="Genome Res.">
        <title>The status, quality, and expansion of the NIH full-length cDNA project: the Mammalian Gene Collection (MGC).</title>
        <authorList>
            <consortium name="The MGC Project Team"/>
        </authorList>
    </citation>
    <scope>NUCLEOTIDE SEQUENCE [LARGE SCALE MRNA]</scope>
    <source>
        <strain>129</strain>
        <strain>C57BL/6J</strain>
        <strain>FVB/N</strain>
        <tissue>Brain</tissue>
        <tissue>Kidney</tissue>
        <tissue>Mammary tumor</tissue>
    </source>
</reference>
<reference key="4">
    <citation type="submission" date="2007-04" db="UniProtKB">
        <authorList>
            <person name="Lubec G."/>
            <person name="Kang S.U."/>
        </authorList>
    </citation>
    <scope>PROTEIN SEQUENCE OF 127-135</scope>
    <scope>IDENTIFICATION BY MASS SPECTROMETRY</scope>
    <source>
        <strain>C57BL/6J</strain>
        <tissue>Brain</tissue>
    </source>
</reference>
<reference key="5">
    <citation type="journal article" date="2006" name="Mol. Cell">
        <title>Substrate and functional diversity of lysine acetylation revealed by a proteomics survey.</title>
        <authorList>
            <person name="Kim S.C."/>
            <person name="Sprung R."/>
            <person name="Chen Y."/>
            <person name="Xu Y."/>
            <person name="Ball H."/>
            <person name="Pei J."/>
            <person name="Cheng T."/>
            <person name="Kho Y."/>
            <person name="Xiao H."/>
            <person name="Xiao L."/>
            <person name="Grishin N.V."/>
            <person name="White M."/>
            <person name="Yang X.-J."/>
            <person name="Zhao Y."/>
        </authorList>
    </citation>
    <scope>ACETYLATION [LARGE SCALE ANALYSIS] AT LYS-120</scope>
    <scope>IDENTIFICATION BY MASS SPECTROMETRY [LARGE SCALE ANALYSIS]</scope>
    <source>
        <tissue>Liver</tissue>
    </source>
</reference>
<reference key="6">
    <citation type="journal article" date="2010" name="Cell">
        <title>A tissue-specific atlas of mouse protein phosphorylation and expression.</title>
        <authorList>
            <person name="Huttlin E.L."/>
            <person name="Jedrychowski M.P."/>
            <person name="Elias J.E."/>
            <person name="Goswami T."/>
            <person name="Rad R."/>
            <person name="Beausoleil S.A."/>
            <person name="Villen J."/>
            <person name="Haas W."/>
            <person name="Sowa M.E."/>
            <person name="Gygi S.P."/>
        </authorList>
    </citation>
    <scope>IDENTIFICATION BY MASS SPECTROMETRY [LARGE SCALE ANALYSIS]</scope>
    <source>
        <tissue>Brain</tissue>
        <tissue>Brown adipose tissue</tissue>
        <tissue>Heart</tissue>
        <tissue>Kidney</tissue>
        <tissue>Liver</tissue>
        <tissue>Lung</tissue>
        <tissue>Pancreas</tissue>
        <tissue>Spleen</tissue>
        <tissue>Testis</tissue>
    </source>
</reference>
<reference key="7">
    <citation type="journal article" date="2013" name="Mol. Cell">
        <title>SIRT5-mediated lysine desuccinylation impacts diverse metabolic pathways.</title>
        <authorList>
            <person name="Park J."/>
            <person name="Chen Y."/>
            <person name="Tishkoff D.X."/>
            <person name="Peng C."/>
            <person name="Tan M."/>
            <person name="Dai L."/>
            <person name="Xie Z."/>
            <person name="Zhang Y."/>
            <person name="Zwaans B.M."/>
            <person name="Skinner M.E."/>
            <person name="Lombard D.B."/>
            <person name="Zhao Y."/>
        </authorList>
    </citation>
    <scope>ACETYLATION [LARGE SCALE ANALYSIS] AT LYS-42 AND LYS-50</scope>
    <scope>IDENTIFICATION BY MASS SPECTROMETRY [LARGE SCALE ANALYSIS]</scope>
    <source>
        <tissue>Embryonic fibroblast</tissue>
    </source>
</reference>
<reference key="8">
    <citation type="journal article" date="2013" name="Proc. Natl. Acad. Sci. U.S.A.">
        <title>Label-free quantitative proteomics of the lysine acetylome in mitochondria identifies substrates of SIRT3 in metabolic pathways.</title>
        <authorList>
            <person name="Rardin M.J."/>
            <person name="Newman J.C."/>
            <person name="Held J.M."/>
            <person name="Cusack M.P."/>
            <person name="Sorensen D.J."/>
            <person name="Li B."/>
            <person name="Schilling B."/>
            <person name="Mooney S.D."/>
            <person name="Kahn C.R."/>
            <person name="Verdin E."/>
            <person name="Gibson B.W."/>
        </authorList>
    </citation>
    <scope>ACETYLATION [LARGE SCALE ANALYSIS] AT LYS-42</scope>
    <scope>IDENTIFICATION BY MASS SPECTROMETRY [LARGE SCALE ANALYSIS]</scope>
    <source>
        <tissue>Liver</tissue>
    </source>
</reference>
<reference key="9">
    <citation type="journal article" date="2019" name="Cell Death Dis.">
        <title>A novel mitochondrial micropeptide MPM enhances mitochondrial respiratory activity and promotes myogenic differentiation.</title>
        <authorList>
            <person name="Lin Y.F."/>
            <person name="Xiao M.H."/>
            <person name="Chen H.X."/>
            <person name="Meng Y."/>
            <person name="Zhao N."/>
            <person name="Yang L."/>
            <person name="Tang H."/>
            <person name="Wang J.L."/>
            <person name="Liu X."/>
            <person name="Zhu Y."/>
            <person name="Zhuang S.M."/>
        </authorList>
    </citation>
    <scope>INTERACTION WITH MTLN</scope>
    <scope>MUTAGENESIS OF GLY-2</scope>
</reference>
<gene>
    <name evidence="8" type="primary">Cyb5r3</name>
    <name type="synonym">Dia1</name>
</gene>
<dbReference type="EC" id="1.6.2.2" evidence="1"/>
<dbReference type="EMBL" id="AF332059">
    <property type="protein sequence ID" value="AAK56088.1"/>
    <property type="molecule type" value="mRNA"/>
</dbReference>
<dbReference type="EMBL" id="AF332060">
    <property type="protein sequence ID" value="AAK56089.1"/>
    <property type="molecule type" value="mRNA"/>
</dbReference>
<dbReference type="EMBL" id="AK002640">
    <property type="protein sequence ID" value="BAB22252.1"/>
    <property type="molecule type" value="mRNA"/>
</dbReference>
<dbReference type="EMBL" id="BC004760">
    <property type="protein sequence ID" value="AAH04760.1"/>
    <property type="molecule type" value="mRNA"/>
</dbReference>
<dbReference type="EMBL" id="BC032013">
    <property type="protein sequence ID" value="AAH32013.1"/>
    <property type="molecule type" value="mRNA"/>
</dbReference>
<dbReference type="EMBL" id="BC043074">
    <property type="protein sequence ID" value="AAH43074.1"/>
    <property type="molecule type" value="mRNA"/>
</dbReference>
<dbReference type="CCDS" id="CCDS27698.1">
    <molecule id="Q9DCN2-1"/>
</dbReference>
<dbReference type="RefSeq" id="NP_084063.1">
    <molecule id="Q9DCN2-1"/>
    <property type="nucleotide sequence ID" value="NM_029787.3"/>
</dbReference>
<dbReference type="RefSeq" id="XP_006520346.1">
    <molecule id="Q9DCN2-2"/>
    <property type="nucleotide sequence ID" value="XM_006520283.5"/>
</dbReference>
<dbReference type="RefSeq" id="XP_030104133.1">
    <molecule id="Q9DCN2-1"/>
    <property type="nucleotide sequence ID" value="XM_030248273.1"/>
</dbReference>
<dbReference type="SMR" id="Q9DCN2"/>
<dbReference type="BioGRID" id="225010">
    <property type="interactions" value="12"/>
</dbReference>
<dbReference type="DIP" id="DIP-57517N"/>
<dbReference type="FunCoup" id="Q9DCN2">
    <property type="interactions" value="2027"/>
</dbReference>
<dbReference type="IntAct" id="Q9DCN2">
    <property type="interactions" value="4"/>
</dbReference>
<dbReference type="MINT" id="Q9DCN2"/>
<dbReference type="STRING" id="10090.ENSMUSP00000018186"/>
<dbReference type="GlyGen" id="Q9DCN2">
    <property type="glycosylation" value="1 site, 1 O-linked glycan (1 site)"/>
</dbReference>
<dbReference type="iPTMnet" id="Q9DCN2"/>
<dbReference type="PhosphoSitePlus" id="Q9DCN2"/>
<dbReference type="SwissPalm" id="Q9DCN2"/>
<dbReference type="jPOST" id="Q9DCN2"/>
<dbReference type="PaxDb" id="10090-ENSMUSP00000018186"/>
<dbReference type="PeptideAtlas" id="Q9DCN2"/>
<dbReference type="ProteomicsDB" id="286151">
    <molecule id="Q9DCN2-1"/>
</dbReference>
<dbReference type="ProteomicsDB" id="286152">
    <molecule id="Q9DCN2-2"/>
</dbReference>
<dbReference type="Pumba" id="Q9DCN2"/>
<dbReference type="TopDownProteomics" id="Q9DCN2-1">
    <molecule id="Q9DCN2-1"/>
</dbReference>
<dbReference type="TopDownProteomics" id="Q9DCN2-2">
    <molecule id="Q9DCN2-2"/>
</dbReference>
<dbReference type="Antibodypedia" id="219">
    <property type="antibodies" value="454 antibodies from 35 providers"/>
</dbReference>
<dbReference type="DNASU" id="109754"/>
<dbReference type="Ensembl" id="ENSMUST00000018186.16">
    <molecule id="Q9DCN2-1"/>
    <property type="protein sequence ID" value="ENSMUSP00000018186.10"/>
    <property type="gene ID" value="ENSMUSG00000018042.19"/>
</dbReference>
<dbReference type="Ensembl" id="ENSMUST00000162834.3">
    <molecule id="Q9DCN2-2"/>
    <property type="protein sequence ID" value="ENSMUSP00000124062.3"/>
    <property type="gene ID" value="ENSMUSG00000018042.19"/>
</dbReference>
<dbReference type="GeneID" id="109754"/>
<dbReference type="KEGG" id="mmu:109754"/>
<dbReference type="UCSC" id="uc007xac.2">
    <molecule id="Q9DCN2-1"/>
    <property type="organism name" value="mouse"/>
</dbReference>
<dbReference type="AGR" id="MGI:94893"/>
<dbReference type="CTD" id="1727"/>
<dbReference type="MGI" id="MGI:94893">
    <property type="gene designation" value="Cyb5r3"/>
</dbReference>
<dbReference type="VEuPathDB" id="HostDB:ENSMUSG00000018042"/>
<dbReference type="eggNOG" id="KOG0534">
    <property type="taxonomic scope" value="Eukaryota"/>
</dbReference>
<dbReference type="GeneTree" id="ENSGT00940000153962"/>
<dbReference type="HOGENOM" id="CLU_003827_9_2_1"/>
<dbReference type="InParanoid" id="Q9DCN2"/>
<dbReference type="OMA" id="KGPEMQK"/>
<dbReference type="PhylomeDB" id="Q9DCN2"/>
<dbReference type="TreeFam" id="TF314333"/>
<dbReference type="BioCyc" id="MetaCyc:MONOMER-14527"/>
<dbReference type="Reactome" id="R-MMU-196836">
    <property type="pathway name" value="Vitamin C (ascorbate) metabolism"/>
</dbReference>
<dbReference type="Reactome" id="R-MMU-211945">
    <property type="pathway name" value="Phase I - Functionalization of compounds"/>
</dbReference>
<dbReference type="Reactome" id="R-MMU-6798695">
    <property type="pathway name" value="Neutrophil degranulation"/>
</dbReference>
<dbReference type="BioGRID-ORCS" id="109754">
    <property type="hits" value="2 hits in 79 CRISPR screens"/>
</dbReference>
<dbReference type="CD-CODE" id="CE726F99">
    <property type="entry name" value="Postsynaptic density"/>
</dbReference>
<dbReference type="ChiTaRS" id="Cyb5r3">
    <property type="organism name" value="mouse"/>
</dbReference>
<dbReference type="PRO" id="PR:Q9DCN2"/>
<dbReference type="Proteomes" id="UP000000589">
    <property type="component" value="Chromosome 15"/>
</dbReference>
<dbReference type="RNAct" id="Q9DCN2">
    <property type="molecule type" value="protein"/>
</dbReference>
<dbReference type="Bgee" id="ENSMUSG00000018042">
    <property type="expression patterns" value="Expressed in placenta labyrinth and 262 other cell types or tissues"/>
</dbReference>
<dbReference type="ExpressionAtlas" id="Q9DCN2">
    <property type="expression patterns" value="baseline and differential"/>
</dbReference>
<dbReference type="GO" id="GO:0005789">
    <property type="term" value="C:endoplasmic reticulum membrane"/>
    <property type="evidence" value="ECO:0000250"/>
    <property type="project" value="UniProtKB"/>
</dbReference>
<dbReference type="GO" id="GO:0005811">
    <property type="term" value="C:lipid droplet"/>
    <property type="evidence" value="ECO:0007669"/>
    <property type="project" value="Ensembl"/>
</dbReference>
<dbReference type="GO" id="GO:0005743">
    <property type="term" value="C:mitochondrial inner membrane"/>
    <property type="evidence" value="ECO:0007005"/>
    <property type="project" value="MGI"/>
</dbReference>
<dbReference type="GO" id="GO:0005741">
    <property type="term" value="C:mitochondrial outer membrane"/>
    <property type="evidence" value="ECO:0000250"/>
    <property type="project" value="UniProtKB"/>
</dbReference>
<dbReference type="GO" id="GO:1903958">
    <property type="term" value="C:nitric-oxide synthase complex"/>
    <property type="evidence" value="ECO:0007669"/>
    <property type="project" value="Ensembl"/>
</dbReference>
<dbReference type="GO" id="GO:0004128">
    <property type="term" value="F:cytochrome-b5 reductase activity, acting on NAD(P)H"/>
    <property type="evidence" value="ECO:0000250"/>
    <property type="project" value="UniProtKB"/>
</dbReference>
<dbReference type="GO" id="GO:0071949">
    <property type="term" value="F:FAD binding"/>
    <property type="evidence" value="ECO:0000250"/>
    <property type="project" value="UniProtKB"/>
</dbReference>
<dbReference type="GO" id="GO:0050421">
    <property type="term" value="F:nitrite reductase (NO-forming) activity"/>
    <property type="evidence" value="ECO:0007669"/>
    <property type="project" value="Ensembl"/>
</dbReference>
<dbReference type="GO" id="GO:0006695">
    <property type="term" value="P:cholesterol biosynthetic process"/>
    <property type="evidence" value="ECO:0007669"/>
    <property type="project" value="UniProtKB-KW"/>
</dbReference>
<dbReference type="GO" id="GO:0006809">
    <property type="term" value="P:nitric oxide biosynthetic process"/>
    <property type="evidence" value="ECO:0007669"/>
    <property type="project" value="Ensembl"/>
</dbReference>
<dbReference type="CDD" id="cd06183">
    <property type="entry name" value="cyt_b5_reduct_like"/>
    <property type="match status" value="1"/>
</dbReference>
<dbReference type="FunFam" id="2.40.30.10:FF:000021">
    <property type="entry name" value="NADH-cytochrome b5 reductase"/>
    <property type="match status" value="1"/>
</dbReference>
<dbReference type="FunFam" id="3.40.50.80:FF:000005">
    <property type="entry name" value="NADH-cytochrome b5 reductase"/>
    <property type="match status" value="1"/>
</dbReference>
<dbReference type="Gene3D" id="3.40.50.80">
    <property type="entry name" value="Nucleotide-binding domain of ferredoxin-NADP reductase (FNR) module"/>
    <property type="match status" value="1"/>
</dbReference>
<dbReference type="Gene3D" id="2.40.30.10">
    <property type="entry name" value="Translation factors"/>
    <property type="match status" value="1"/>
</dbReference>
<dbReference type="InterPro" id="IPR001834">
    <property type="entry name" value="CBR-like"/>
</dbReference>
<dbReference type="InterPro" id="IPR008333">
    <property type="entry name" value="Cbr1-like_FAD-bd_dom"/>
</dbReference>
<dbReference type="InterPro" id="IPR017927">
    <property type="entry name" value="FAD-bd_FR_type"/>
</dbReference>
<dbReference type="InterPro" id="IPR001709">
    <property type="entry name" value="Flavoprot_Pyr_Nucl_cyt_Rdtase"/>
</dbReference>
<dbReference type="InterPro" id="IPR039261">
    <property type="entry name" value="FNR_nucleotide-bd"/>
</dbReference>
<dbReference type="InterPro" id="IPR001433">
    <property type="entry name" value="OxRdtase_FAD/NAD-bd"/>
</dbReference>
<dbReference type="InterPro" id="IPR017938">
    <property type="entry name" value="Riboflavin_synthase-like_b-brl"/>
</dbReference>
<dbReference type="PANTHER" id="PTHR19370">
    <property type="entry name" value="NADH-CYTOCHROME B5 REDUCTASE"/>
    <property type="match status" value="1"/>
</dbReference>
<dbReference type="PANTHER" id="PTHR19370:SF121">
    <property type="entry name" value="NADH-CYTOCHROME B5 REDUCTASE 3"/>
    <property type="match status" value="1"/>
</dbReference>
<dbReference type="Pfam" id="PF00970">
    <property type="entry name" value="FAD_binding_6"/>
    <property type="match status" value="1"/>
</dbReference>
<dbReference type="Pfam" id="PF00175">
    <property type="entry name" value="NAD_binding_1"/>
    <property type="match status" value="1"/>
</dbReference>
<dbReference type="PRINTS" id="PR00406">
    <property type="entry name" value="CYTB5RDTASE"/>
</dbReference>
<dbReference type="PRINTS" id="PR00371">
    <property type="entry name" value="FPNCR"/>
</dbReference>
<dbReference type="SUPFAM" id="SSF52343">
    <property type="entry name" value="Ferredoxin reductase-like, C-terminal NADP-linked domain"/>
    <property type="match status" value="1"/>
</dbReference>
<dbReference type="SUPFAM" id="SSF63380">
    <property type="entry name" value="Riboflavin synthase domain-like"/>
    <property type="match status" value="1"/>
</dbReference>
<dbReference type="PROSITE" id="PS51384">
    <property type="entry name" value="FAD_FR"/>
    <property type="match status" value="1"/>
</dbReference>
<proteinExistence type="evidence at protein level"/>